<sequence length="697" mass="76127">MSNSQPPRSSSSSQERAEELRRLLNRAAHAYYVLDAPDMEDPVYDQLYRELQDLEHQDSTLVSADSPTQRVGGRLADGFRSVSHRISLFSLDNAFNRDELHGWYSRLLKALDRTPAAGSPPPTLPMVGELKIDGNALALSYENGVLVRAATRGDGEQGEEITANVRTISSIPLRLHLEPVPAWVEVRGEAFIPDATFHAINNERLSRDESLFANPRNACAGTLRQLDPSVVAARRLDFFAYTLHLPDEWQERRPLTQWDALQWLGDAGFKVNPNAGLLPDLQAVEQFFDTWDTERRQLDYATDGVVVKLNDLRLQDAAGFTQKAPRWAIALKYPAEEAPSKILRISYQVGRTGVITPVAEFEPVGLAGTSVSRASLHNADRLVELDLHDGDTIVVRKAGEIIPEVVRVLPELRPALAQPLEITKTCPACGSTLVRESNESATRCINSSCPAILRGALRHWVSKGAMDIDGLGSKLIEQLVDRGLVQSIADLYRLDMALLGSLERMGSKSAENLIQALNASRSQGWAKQLYGLGIHHVGDVNAKAITTAFPNADSLNQAACHAPESITAIFGVGKEIAQSLQQWFSSPANQRLLDELRSLGFSLSLNEEEQSRATTAAANHHLTGSTFVLTGTLPTLTRSQAKEQIEACGGKVSGSVSKKTSYLVAGEEAGSKLTKAQELGVSILDEEALQNMLRGST</sequence>
<organism>
    <name type="scientific">Synechococcus sp. (strain CC9311)</name>
    <dbReference type="NCBI Taxonomy" id="64471"/>
    <lineage>
        <taxon>Bacteria</taxon>
        <taxon>Bacillati</taxon>
        <taxon>Cyanobacteriota</taxon>
        <taxon>Cyanophyceae</taxon>
        <taxon>Synechococcales</taxon>
        <taxon>Synechococcaceae</taxon>
        <taxon>Synechococcus</taxon>
    </lineage>
</organism>
<evidence type="ECO:0000255" key="1">
    <source>
        <dbReference type="HAMAP-Rule" id="MF_01588"/>
    </source>
</evidence>
<protein>
    <recommendedName>
        <fullName evidence="1">DNA ligase</fullName>
        <ecNumber evidence="1">6.5.1.2</ecNumber>
    </recommendedName>
    <alternativeName>
        <fullName evidence="1">Polydeoxyribonucleotide synthase [NAD(+)]</fullName>
    </alternativeName>
</protein>
<dbReference type="EC" id="6.5.1.2" evidence="1"/>
<dbReference type="EMBL" id="CP000435">
    <property type="protein sequence ID" value="ABI46368.1"/>
    <property type="molecule type" value="Genomic_DNA"/>
</dbReference>
<dbReference type="RefSeq" id="WP_011620694.1">
    <property type="nucleotide sequence ID" value="NC_008319.1"/>
</dbReference>
<dbReference type="SMR" id="Q0I6C8"/>
<dbReference type="STRING" id="64471.sync_2806"/>
<dbReference type="KEGG" id="syg:sync_2806"/>
<dbReference type="eggNOG" id="COG0272">
    <property type="taxonomic scope" value="Bacteria"/>
</dbReference>
<dbReference type="HOGENOM" id="CLU_007764_2_1_3"/>
<dbReference type="OrthoDB" id="9759736at2"/>
<dbReference type="Proteomes" id="UP000001961">
    <property type="component" value="Chromosome"/>
</dbReference>
<dbReference type="GO" id="GO:0005829">
    <property type="term" value="C:cytosol"/>
    <property type="evidence" value="ECO:0007669"/>
    <property type="project" value="TreeGrafter"/>
</dbReference>
<dbReference type="GO" id="GO:0003911">
    <property type="term" value="F:DNA ligase (NAD+) activity"/>
    <property type="evidence" value="ECO:0007669"/>
    <property type="project" value="UniProtKB-UniRule"/>
</dbReference>
<dbReference type="GO" id="GO:0046872">
    <property type="term" value="F:metal ion binding"/>
    <property type="evidence" value="ECO:0007669"/>
    <property type="project" value="UniProtKB-KW"/>
</dbReference>
<dbReference type="GO" id="GO:0006281">
    <property type="term" value="P:DNA repair"/>
    <property type="evidence" value="ECO:0007669"/>
    <property type="project" value="UniProtKB-KW"/>
</dbReference>
<dbReference type="GO" id="GO:0006260">
    <property type="term" value="P:DNA replication"/>
    <property type="evidence" value="ECO:0007669"/>
    <property type="project" value="UniProtKB-KW"/>
</dbReference>
<dbReference type="CDD" id="cd17748">
    <property type="entry name" value="BRCT_DNA_ligase_like"/>
    <property type="match status" value="1"/>
</dbReference>
<dbReference type="CDD" id="cd00114">
    <property type="entry name" value="LIGANc"/>
    <property type="match status" value="1"/>
</dbReference>
<dbReference type="FunFam" id="1.10.150.20:FF:000007">
    <property type="entry name" value="DNA ligase"/>
    <property type="match status" value="1"/>
</dbReference>
<dbReference type="FunFam" id="3.30.470.30:FF:000001">
    <property type="entry name" value="DNA ligase"/>
    <property type="match status" value="1"/>
</dbReference>
<dbReference type="FunFam" id="3.40.50.10190:FF:000054">
    <property type="entry name" value="DNA ligase"/>
    <property type="match status" value="1"/>
</dbReference>
<dbReference type="Gene3D" id="6.20.10.30">
    <property type="match status" value="1"/>
</dbReference>
<dbReference type="Gene3D" id="1.10.150.20">
    <property type="entry name" value="5' to 3' exonuclease, C-terminal subdomain"/>
    <property type="match status" value="2"/>
</dbReference>
<dbReference type="Gene3D" id="3.40.50.10190">
    <property type="entry name" value="BRCT domain"/>
    <property type="match status" value="1"/>
</dbReference>
<dbReference type="Gene3D" id="3.30.470.30">
    <property type="entry name" value="DNA ligase/mRNA capping enzyme"/>
    <property type="match status" value="1"/>
</dbReference>
<dbReference type="Gene3D" id="1.10.287.610">
    <property type="entry name" value="Helix hairpin bin"/>
    <property type="match status" value="1"/>
</dbReference>
<dbReference type="Gene3D" id="2.40.50.140">
    <property type="entry name" value="Nucleic acid-binding proteins"/>
    <property type="match status" value="1"/>
</dbReference>
<dbReference type="HAMAP" id="MF_01588">
    <property type="entry name" value="DNA_ligase_A"/>
    <property type="match status" value="1"/>
</dbReference>
<dbReference type="InterPro" id="IPR001357">
    <property type="entry name" value="BRCT_dom"/>
</dbReference>
<dbReference type="InterPro" id="IPR036420">
    <property type="entry name" value="BRCT_dom_sf"/>
</dbReference>
<dbReference type="InterPro" id="IPR041663">
    <property type="entry name" value="DisA/LigA_HHH"/>
</dbReference>
<dbReference type="InterPro" id="IPR001679">
    <property type="entry name" value="DNA_ligase"/>
</dbReference>
<dbReference type="InterPro" id="IPR033136">
    <property type="entry name" value="DNA_ligase_CS"/>
</dbReference>
<dbReference type="InterPro" id="IPR013839">
    <property type="entry name" value="DNAligase_adenylation"/>
</dbReference>
<dbReference type="InterPro" id="IPR013840">
    <property type="entry name" value="DNAligase_N"/>
</dbReference>
<dbReference type="InterPro" id="IPR012340">
    <property type="entry name" value="NA-bd_OB-fold"/>
</dbReference>
<dbReference type="InterPro" id="IPR004150">
    <property type="entry name" value="NAD_DNA_ligase_OB"/>
</dbReference>
<dbReference type="InterPro" id="IPR010994">
    <property type="entry name" value="RuvA_2-like"/>
</dbReference>
<dbReference type="InterPro" id="IPR004149">
    <property type="entry name" value="Znf_DNAligase_C4"/>
</dbReference>
<dbReference type="NCBIfam" id="TIGR00575">
    <property type="entry name" value="dnlj"/>
    <property type="match status" value="1"/>
</dbReference>
<dbReference type="NCBIfam" id="NF005932">
    <property type="entry name" value="PRK07956.1"/>
    <property type="match status" value="1"/>
</dbReference>
<dbReference type="PANTHER" id="PTHR23389">
    <property type="entry name" value="CHROMOSOME TRANSMISSION FIDELITY FACTOR 18"/>
    <property type="match status" value="1"/>
</dbReference>
<dbReference type="PANTHER" id="PTHR23389:SF9">
    <property type="entry name" value="DNA LIGASE"/>
    <property type="match status" value="1"/>
</dbReference>
<dbReference type="Pfam" id="PF00533">
    <property type="entry name" value="BRCT"/>
    <property type="match status" value="1"/>
</dbReference>
<dbReference type="Pfam" id="PF01653">
    <property type="entry name" value="DNA_ligase_aden"/>
    <property type="match status" value="1"/>
</dbReference>
<dbReference type="Pfam" id="PF03120">
    <property type="entry name" value="DNA_ligase_OB"/>
    <property type="match status" value="1"/>
</dbReference>
<dbReference type="Pfam" id="PF03119">
    <property type="entry name" value="DNA_ligase_ZBD"/>
    <property type="match status" value="1"/>
</dbReference>
<dbReference type="Pfam" id="PF12826">
    <property type="entry name" value="HHH_2"/>
    <property type="match status" value="1"/>
</dbReference>
<dbReference type="Pfam" id="PF14520">
    <property type="entry name" value="HHH_5"/>
    <property type="match status" value="1"/>
</dbReference>
<dbReference type="PIRSF" id="PIRSF001604">
    <property type="entry name" value="LigA"/>
    <property type="match status" value="1"/>
</dbReference>
<dbReference type="SMART" id="SM00292">
    <property type="entry name" value="BRCT"/>
    <property type="match status" value="1"/>
</dbReference>
<dbReference type="SMART" id="SM00532">
    <property type="entry name" value="LIGANc"/>
    <property type="match status" value="1"/>
</dbReference>
<dbReference type="SUPFAM" id="SSF52113">
    <property type="entry name" value="BRCT domain"/>
    <property type="match status" value="1"/>
</dbReference>
<dbReference type="SUPFAM" id="SSF56091">
    <property type="entry name" value="DNA ligase/mRNA capping enzyme, catalytic domain"/>
    <property type="match status" value="1"/>
</dbReference>
<dbReference type="SUPFAM" id="SSF50249">
    <property type="entry name" value="Nucleic acid-binding proteins"/>
    <property type="match status" value="1"/>
</dbReference>
<dbReference type="SUPFAM" id="SSF47781">
    <property type="entry name" value="RuvA domain 2-like"/>
    <property type="match status" value="1"/>
</dbReference>
<dbReference type="PROSITE" id="PS50172">
    <property type="entry name" value="BRCT"/>
    <property type="match status" value="1"/>
</dbReference>
<dbReference type="PROSITE" id="PS01056">
    <property type="entry name" value="DNA_LIGASE_N2"/>
    <property type="match status" value="1"/>
</dbReference>
<reference key="1">
    <citation type="journal article" date="2006" name="Proc. Natl. Acad. Sci. U.S.A.">
        <title>Genome sequence of Synechococcus CC9311: insights into adaptation to a coastal environment.</title>
        <authorList>
            <person name="Palenik B."/>
            <person name="Ren Q."/>
            <person name="Dupont C.L."/>
            <person name="Myers G.S."/>
            <person name="Heidelberg J.F."/>
            <person name="Badger J.H."/>
            <person name="Madupu R."/>
            <person name="Nelson W.C."/>
            <person name="Brinkac L.M."/>
            <person name="Dodson R.J."/>
            <person name="Durkin A.S."/>
            <person name="Daugherty S.C."/>
            <person name="Sullivan S.A."/>
            <person name="Khouri H."/>
            <person name="Mohamoud Y."/>
            <person name="Halpin R."/>
            <person name="Paulsen I.T."/>
        </authorList>
    </citation>
    <scope>NUCLEOTIDE SEQUENCE [LARGE SCALE GENOMIC DNA]</scope>
    <source>
        <strain>CC9311</strain>
    </source>
</reference>
<proteinExistence type="inferred from homology"/>
<name>DNLJ_SYNS3</name>
<comment type="function">
    <text evidence="1">DNA ligase that catalyzes the formation of phosphodiester linkages between 5'-phosphoryl and 3'-hydroxyl groups in double-stranded DNA using NAD as a coenzyme and as the energy source for the reaction. It is essential for DNA replication and repair of damaged DNA.</text>
</comment>
<comment type="catalytic activity">
    <reaction evidence="1">
        <text>NAD(+) + (deoxyribonucleotide)n-3'-hydroxyl + 5'-phospho-(deoxyribonucleotide)m = (deoxyribonucleotide)n+m + AMP + beta-nicotinamide D-nucleotide.</text>
        <dbReference type="EC" id="6.5.1.2"/>
    </reaction>
</comment>
<comment type="cofactor">
    <cofactor evidence="1">
        <name>Mg(2+)</name>
        <dbReference type="ChEBI" id="CHEBI:18420"/>
    </cofactor>
    <cofactor evidence="1">
        <name>Mn(2+)</name>
        <dbReference type="ChEBI" id="CHEBI:29035"/>
    </cofactor>
</comment>
<comment type="similarity">
    <text evidence="1">Belongs to the NAD-dependent DNA ligase family. LigA subfamily.</text>
</comment>
<accession>Q0I6C8</accession>
<gene>
    <name evidence="1" type="primary">ligA</name>
    <name type="ordered locus">sync_2806</name>
</gene>
<feature type="chain" id="PRO_0000313479" description="DNA ligase">
    <location>
        <begin position="1"/>
        <end position="697"/>
    </location>
</feature>
<feature type="domain" description="BRCT" evidence="1">
    <location>
        <begin position="617"/>
        <end position="697"/>
    </location>
</feature>
<feature type="active site" description="N6-AMP-lysine intermediate" evidence="1">
    <location>
        <position position="131"/>
    </location>
</feature>
<feature type="binding site" evidence="1">
    <location>
        <begin position="41"/>
        <end position="45"/>
    </location>
    <ligand>
        <name>NAD(+)</name>
        <dbReference type="ChEBI" id="CHEBI:57540"/>
    </ligand>
</feature>
<feature type="binding site" evidence="1">
    <location>
        <begin position="90"/>
        <end position="91"/>
    </location>
    <ligand>
        <name>NAD(+)</name>
        <dbReference type="ChEBI" id="CHEBI:57540"/>
    </ligand>
</feature>
<feature type="binding site" evidence="1">
    <location>
        <position position="129"/>
    </location>
    <ligand>
        <name>NAD(+)</name>
        <dbReference type="ChEBI" id="CHEBI:57540"/>
    </ligand>
</feature>
<feature type="binding site" evidence="1">
    <location>
        <position position="152"/>
    </location>
    <ligand>
        <name>NAD(+)</name>
        <dbReference type="ChEBI" id="CHEBI:57540"/>
    </ligand>
</feature>
<feature type="binding site" evidence="1">
    <location>
        <position position="189"/>
    </location>
    <ligand>
        <name>NAD(+)</name>
        <dbReference type="ChEBI" id="CHEBI:57540"/>
    </ligand>
</feature>
<feature type="binding site" evidence="1">
    <location>
        <position position="308"/>
    </location>
    <ligand>
        <name>NAD(+)</name>
        <dbReference type="ChEBI" id="CHEBI:57540"/>
    </ligand>
</feature>
<feature type="binding site" evidence="1">
    <location>
        <position position="332"/>
    </location>
    <ligand>
        <name>NAD(+)</name>
        <dbReference type="ChEBI" id="CHEBI:57540"/>
    </ligand>
</feature>
<feature type="binding site" evidence="1">
    <location>
        <position position="426"/>
    </location>
    <ligand>
        <name>Zn(2+)</name>
        <dbReference type="ChEBI" id="CHEBI:29105"/>
    </ligand>
</feature>
<feature type="binding site" evidence="1">
    <location>
        <position position="429"/>
    </location>
    <ligand>
        <name>Zn(2+)</name>
        <dbReference type="ChEBI" id="CHEBI:29105"/>
    </ligand>
</feature>
<feature type="binding site" evidence="1">
    <location>
        <position position="444"/>
    </location>
    <ligand>
        <name>Zn(2+)</name>
        <dbReference type="ChEBI" id="CHEBI:29105"/>
    </ligand>
</feature>
<feature type="binding site" evidence="1">
    <location>
        <position position="449"/>
    </location>
    <ligand>
        <name>Zn(2+)</name>
        <dbReference type="ChEBI" id="CHEBI:29105"/>
    </ligand>
</feature>
<keyword id="KW-0227">DNA damage</keyword>
<keyword id="KW-0234">DNA repair</keyword>
<keyword id="KW-0235">DNA replication</keyword>
<keyword id="KW-0436">Ligase</keyword>
<keyword id="KW-0460">Magnesium</keyword>
<keyword id="KW-0464">Manganese</keyword>
<keyword id="KW-0479">Metal-binding</keyword>
<keyword id="KW-0520">NAD</keyword>
<keyword id="KW-1185">Reference proteome</keyword>
<keyword id="KW-0862">Zinc</keyword>